<organism>
    <name type="scientific">Borrelia duttonii (strain Ly)</name>
    <dbReference type="NCBI Taxonomy" id="412419"/>
    <lineage>
        <taxon>Bacteria</taxon>
        <taxon>Pseudomonadati</taxon>
        <taxon>Spirochaetota</taxon>
        <taxon>Spirochaetia</taxon>
        <taxon>Spirochaetales</taxon>
        <taxon>Borreliaceae</taxon>
        <taxon>Borrelia</taxon>
    </lineage>
</organism>
<gene>
    <name evidence="1" type="primary">rpsZ</name>
    <name evidence="1" type="synonym">rpsN</name>
    <name type="ordered locus">BDU_494</name>
</gene>
<dbReference type="EMBL" id="CP000976">
    <property type="protein sequence ID" value="ACH93435.1"/>
    <property type="molecule type" value="Genomic_DNA"/>
</dbReference>
<dbReference type="RefSeq" id="WP_012538245.1">
    <property type="nucleotide sequence ID" value="NC_011229.1"/>
</dbReference>
<dbReference type="SMR" id="B5RM49"/>
<dbReference type="STRING" id="412419.BDU_494"/>
<dbReference type="KEGG" id="bdu:BDU_494"/>
<dbReference type="eggNOG" id="COG0199">
    <property type="taxonomic scope" value="Bacteria"/>
</dbReference>
<dbReference type="HOGENOM" id="CLU_139869_3_0_12"/>
<dbReference type="OrthoDB" id="9810484at2"/>
<dbReference type="Proteomes" id="UP000000611">
    <property type="component" value="Chromosome"/>
</dbReference>
<dbReference type="GO" id="GO:0005737">
    <property type="term" value="C:cytoplasm"/>
    <property type="evidence" value="ECO:0007669"/>
    <property type="project" value="UniProtKB-ARBA"/>
</dbReference>
<dbReference type="GO" id="GO:0015935">
    <property type="term" value="C:small ribosomal subunit"/>
    <property type="evidence" value="ECO:0007669"/>
    <property type="project" value="TreeGrafter"/>
</dbReference>
<dbReference type="GO" id="GO:0019843">
    <property type="term" value="F:rRNA binding"/>
    <property type="evidence" value="ECO:0007669"/>
    <property type="project" value="UniProtKB-UniRule"/>
</dbReference>
<dbReference type="GO" id="GO:0003735">
    <property type="term" value="F:structural constituent of ribosome"/>
    <property type="evidence" value="ECO:0007669"/>
    <property type="project" value="InterPro"/>
</dbReference>
<dbReference type="GO" id="GO:0008270">
    <property type="term" value="F:zinc ion binding"/>
    <property type="evidence" value="ECO:0007669"/>
    <property type="project" value="UniProtKB-UniRule"/>
</dbReference>
<dbReference type="GO" id="GO:0006412">
    <property type="term" value="P:translation"/>
    <property type="evidence" value="ECO:0007669"/>
    <property type="project" value="UniProtKB-UniRule"/>
</dbReference>
<dbReference type="FunFam" id="4.10.830.10:FF:000001">
    <property type="entry name" value="30S ribosomal protein S14 type Z"/>
    <property type="match status" value="1"/>
</dbReference>
<dbReference type="Gene3D" id="4.10.830.10">
    <property type="entry name" value="30s Ribosomal Protein S14, Chain N"/>
    <property type="match status" value="1"/>
</dbReference>
<dbReference type="HAMAP" id="MF_01364_B">
    <property type="entry name" value="Ribosomal_uS14_2_B"/>
    <property type="match status" value="1"/>
</dbReference>
<dbReference type="InterPro" id="IPR001209">
    <property type="entry name" value="Ribosomal_uS14"/>
</dbReference>
<dbReference type="InterPro" id="IPR023053">
    <property type="entry name" value="Ribosomal_uS14_bact"/>
</dbReference>
<dbReference type="InterPro" id="IPR018271">
    <property type="entry name" value="Ribosomal_uS14_CS"/>
</dbReference>
<dbReference type="InterPro" id="IPR043140">
    <property type="entry name" value="Ribosomal_uS14_sf"/>
</dbReference>
<dbReference type="NCBIfam" id="NF005974">
    <property type="entry name" value="PRK08061.1"/>
    <property type="match status" value="1"/>
</dbReference>
<dbReference type="PANTHER" id="PTHR19836">
    <property type="entry name" value="30S RIBOSOMAL PROTEIN S14"/>
    <property type="match status" value="1"/>
</dbReference>
<dbReference type="PANTHER" id="PTHR19836:SF19">
    <property type="entry name" value="SMALL RIBOSOMAL SUBUNIT PROTEIN US14M"/>
    <property type="match status" value="1"/>
</dbReference>
<dbReference type="Pfam" id="PF00253">
    <property type="entry name" value="Ribosomal_S14"/>
    <property type="match status" value="1"/>
</dbReference>
<dbReference type="SUPFAM" id="SSF57716">
    <property type="entry name" value="Glucocorticoid receptor-like (DNA-binding domain)"/>
    <property type="match status" value="1"/>
</dbReference>
<dbReference type="PROSITE" id="PS00527">
    <property type="entry name" value="RIBOSOMAL_S14"/>
    <property type="match status" value="1"/>
</dbReference>
<evidence type="ECO:0000255" key="1">
    <source>
        <dbReference type="HAMAP-Rule" id="MF_01364"/>
    </source>
</evidence>
<evidence type="ECO:0000305" key="2"/>
<accession>B5RM49</accession>
<sequence length="61" mass="7051">MAKKSMIVKALRKPKYKTRQKNRCKLCGRPKGYMRDFSMCRICFRNHASAGLIPGVSKSSW</sequence>
<protein>
    <recommendedName>
        <fullName evidence="1">Small ribosomal subunit protein uS14</fullName>
    </recommendedName>
    <alternativeName>
        <fullName evidence="2">30S ribosomal protein S14 type Z</fullName>
    </alternativeName>
</protein>
<comment type="function">
    <text evidence="1">Binds 16S rRNA, required for the assembly of 30S particles and may also be responsible for determining the conformation of the 16S rRNA at the A site.</text>
</comment>
<comment type="cofactor">
    <cofactor evidence="1">
        <name>Zn(2+)</name>
        <dbReference type="ChEBI" id="CHEBI:29105"/>
    </cofactor>
    <text evidence="1">Binds 1 zinc ion per subunit.</text>
</comment>
<comment type="subunit">
    <text evidence="1">Part of the 30S ribosomal subunit. Contacts proteins S3 and S10.</text>
</comment>
<comment type="similarity">
    <text evidence="1">Belongs to the universal ribosomal protein uS14 family. Zinc-binding uS14 subfamily.</text>
</comment>
<keyword id="KW-0479">Metal-binding</keyword>
<keyword id="KW-0687">Ribonucleoprotein</keyword>
<keyword id="KW-0689">Ribosomal protein</keyword>
<keyword id="KW-0694">RNA-binding</keyword>
<keyword id="KW-0699">rRNA-binding</keyword>
<keyword id="KW-0862">Zinc</keyword>
<proteinExistence type="inferred from homology"/>
<feature type="chain" id="PRO_1000143887" description="Small ribosomal subunit protein uS14">
    <location>
        <begin position="1"/>
        <end position="61"/>
    </location>
</feature>
<feature type="binding site" evidence="1">
    <location>
        <position position="24"/>
    </location>
    <ligand>
        <name>Zn(2+)</name>
        <dbReference type="ChEBI" id="CHEBI:29105"/>
    </ligand>
</feature>
<feature type="binding site" evidence="1">
    <location>
        <position position="27"/>
    </location>
    <ligand>
        <name>Zn(2+)</name>
        <dbReference type="ChEBI" id="CHEBI:29105"/>
    </ligand>
</feature>
<feature type="binding site" evidence="1">
    <location>
        <position position="40"/>
    </location>
    <ligand>
        <name>Zn(2+)</name>
        <dbReference type="ChEBI" id="CHEBI:29105"/>
    </ligand>
</feature>
<feature type="binding site" evidence="1">
    <location>
        <position position="43"/>
    </location>
    <ligand>
        <name>Zn(2+)</name>
        <dbReference type="ChEBI" id="CHEBI:29105"/>
    </ligand>
</feature>
<name>RS14Z_BORDL</name>
<reference key="1">
    <citation type="journal article" date="2008" name="PLoS Genet.">
        <title>The genome of Borrelia recurrentis, the agent of deadly louse-borne relapsing fever, is a degraded subset of tick-borne Borrelia duttonii.</title>
        <authorList>
            <person name="Lescot M."/>
            <person name="Audic S."/>
            <person name="Robert C."/>
            <person name="Nguyen T.T."/>
            <person name="Blanc G."/>
            <person name="Cutler S.J."/>
            <person name="Wincker P."/>
            <person name="Couloux A."/>
            <person name="Claverie J.-M."/>
            <person name="Raoult D."/>
            <person name="Drancourt M."/>
        </authorList>
    </citation>
    <scope>NUCLEOTIDE SEQUENCE [LARGE SCALE GENOMIC DNA]</scope>
    <source>
        <strain>Ly</strain>
    </source>
</reference>